<proteinExistence type="inferred from homology"/>
<gene>
    <name type="ordered locus">TM_1557</name>
</gene>
<protein>
    <recommendedName>
        <fullName>UPF0758 protein TM_1557</fullName>
    </recommendedName>
</protein>
<dbReference type="EMBL" id="AE000512">
    <property type="protein sequence ID" value="AAD36623.1"/>
    <property type="molecule type" value="Genomic_DNA"/>
</dbReference>
<dbReference type="PIR" id="H72239">
    <property type="entry name" value="H72239"/>
</dbReference>
<dbReference type="RefSeq" id="NP_229357.1">
    <property type="nucleotide sequence ID" value="NC_000853.1"/>
</dbReference>
<dbReference type="SMR" id="Q9X1P3"/>
<dbReference type="FunCoup" id="Q9X1P3">
    <property type="interactions" value="179"/>
</dbReference>
<dbReference type="STRING" id="243274.TM_1557"/>
<dbReference type="PaxDb" id="243274-THEMA_06495"/>
<dbReference type="EnsemblBacteria" id="AAD36623">
    <property type="protein sequence ID" value="AAD36623"/>
    <property type="gene ID" value="TM_1557"/>
</dbReference>
<dbReference type="KEGG" id="tma:TM1557"/>
<dbReference type="KEGG" id="tmw:THMA_1592"/>
<dbReference type="PATRIC" id="fig|243274.19.peg.1562"/>
<dbReference type="eggNOG" id="COG2003">
    <property type="taxonomic scope" value="Bacteria"/>
</dbReference>
<dbReference type="InParanoid" id="Q9X1P3"/>
<dbReference type="OrthoDB" id="9804482at2"/>
<dbReference type="Proteomes" id="UP000008183">
    <property type="component" value="Chromosome"/>
</dbReference>
<dbReference type="GO" id="GO:0046872">
    <property type="term" value="F:metal ion binding"/>
    <property type="evidence" value="ECO:0007669"/>
    <property type="project" value="UniProtKB-KW"/>
</dbReference>
<dbReference type="GO" id="GO:0008237">
    <property type="term" value="F:metallopeptidase activity"/>
    <property type="evidence" value="ECO:0007669"/>
    <property type="project" value="UniProtKB-KW"/>
</dbReference>
<dbReference type="GO" id="GO:0006508">
    <property type="term" value="P:proteolysis"/>
    <property type="evidence" value="ECO:0007669"/>
    <property type="project" value="UniProtKB-KW"/>
</dbReference>
<dbReference type="CDD" id="cd08071">
    <property type="entry name" value="MPN_DUF2466"/>
    <property type="match status" value="1"/>
</dbReference>
<dbReference type="Gene3D" id="1.10.150.20">
    <property type="entry name" value="5' to 3' exonuclease, C-terminal subdomain"/>
    <property type="match status" value="1"/>
</dbReference>
<dbReference type="Gene3D" id="3.40.140.10">
    <property type="entry name" value="Cytidine Deaminase, domain 2"/>
    <property type="match status" value="1"/>
</dbReference>
<dbReference type="InterPro" id="IPR037518">
    <property type="entry name" value="MPN"/>
</dbReference>
<dbReference type="InterPro" id="IPR025657">
    <property type="entry name" value="RadC_JAB"/>
</dbReference>
<dbReference type="InterPro" id="IPR010994">
    <property type="entry name" value="RuvA_2-like"/>
</dbReference>
<dbReference type="InterPro" id="IPR001405">
    <property type="entry name" value="UPF0758"/>
</dbReference>
<dbReference type="InterPro" id="IPR020891">
    <property type="entry name" value="UPF0758_CS"/>
</dbReference>
<dbReference type="InterPro" id="IPR046778">
    <property type="entry name" value="UPF0758_N"/>
</dbReference>
<dbReference type="NCBIfam" id="NF000642">
    <property type="entry name" value="PRK00024.1"/>
    <property type="match status" value="1"/>
</dbReference>
<dbReference type="NCBIfam" id="TIGR00608">
    <property type="entry name" value="radc"/>
    <property type="match status" value="1"/>
</dbReference>
<dbReference type="PANTHER" id="PTHR30471">
    <property type="entry name" value="DNA REPAIR PROTEIN RADC"/>
    <property type="match status" value="1"/>
</dbReference>
<dbReference type="PANTHER" id="PTHR30471:SF3">
    <property type="entry name" value="UPF0758 PROTEIN YEES-RELATED"/>
    <property type="match status" value="1"/>
</dbReference>
<dbReference type="Pfam" id="PF04002">
    <property type="entry name" value="RadC"/>
    <property type="match status" value="1"/>
</dbReference>
<dbReference type="Pfam" id="PF20582">
    <property type="entry name" value="UPF0758_N"/>
    <property type="match status" value="1"/>
</dbReference>
<dbReference type="SUPFAM" id="SSF102712">
    <property type="entry name" value="JAB1/MPN domain"/>
    <property type="match status" value="1"/>
</dbReference>
<dbReference type="SUPFAM" id="SSF47781">
    <property type="entry name" value="RuvA domain 2-like"/>
    <property type="match status" value="1"/>
</dbReference>
<dbReference type="PROSITE" id="PS50249">
    <property type="entry name" value="MPN"/>
    <property type="match status" value="1"/>
</dbReference>
<dbReference type="PROSITE" id="PS01302">
    <property type="entry name" value="UPF0758"/>
    <property type="match status" value="1"/>
</dbReference>
<feature type="chain" id="PRO_0000190747" description="UPF0758 protein TM_1557">
    <location>
        <begin position="1"/>
        <end position="222"/>
    </location>
</feature>
<feature type="domain" description="MPN" evidence="1">
    <location>
        <begin position="101"/>
        <end position="222"/>
    </location>
</feature>
<feature type="short sequence motif" description="JAMM motif" evidence="1">
    <location>
        <begin position="171"/>
        <end position="184"/>
    </location>
</feature>
<feature type="binding site" evidence="1">
    <location>
        <position position="171"/>
    </location>
    <ligand>
        <name>Zn(2+)</name>
        <dbReference type="ChEBI" id="CHEBI:29105"/>
        <note>catalytic</note>
    </ligand>
</feature>
<feature type="binding site" evidence="1">
    <location>
        <position position="173"/>
    </location>
    <ligand>
        <name>Zn(2+)</name>
        <dbReference type="ChEBI" id="CHEBI:29105"/>
        <note>catalytic</note>
    </ligand>
</feature>
<feature type="binding site" evidence="1">
    <location>
        <position position="184"/>
    </location>
    <ligand>
        <name>Zn(2+)</name>
        <dbReference type="ChEBI" id="CHEBI:29105"/>
        <note>catalytic</note>
    </ligand>
</feature>
<accession>Q9X1P3</accession>
<keyword id="KW-0378">Hydrolase</keyword>
<keyword id="KW-0479">Metal-binding</keyword>
<keyword id="KW-0482">Metalloprotease</keyword>
<keyword id="KW-0645">Protease</keyword>
<keyword id="KW-1185">Reference proteome</keyword>
<keyword id="KW-0862">Zinc</keyword>
<name>Y1557_THEMA</name>
<comment type="similarity">
    <text evidence="2">Belongs to the UPF0758 family.</text>
</comment>
<organism>
    <name type="scientific">Thermotoga maritima (strain ATCC 43589 / DSM 3109 / JCM 10099 / NBRC 100826 / MSB8)</name>
    <dbReference type="NCBI Taxonomy" id="243274"/>
    <lineage>
        <taxon>Bacteria</taxon>
        <taxon>Thermotogati</taxon>
        <taxon>Thermotogota</taxon>
        <taxon>Thermotogae</taxon>
        <taxon>Thermotogales</taxon>
        <taxon>Thermotogaceae</taxon>
        <taxon>Thermotoga</taxon>
    </lineage>
</organism>
<evidence type="ECO:0000255" key="1">
    <source>
        <dbReference type="PROSITE-ProRule" id="PRU01182"/>
    </source>
</evidence>
<evidence type="ECO:0000305" key="2"/>
<reference key="1">
    <citation type="journal article" date="1999" name="Nature">
        <title>Evidence for lateral gene transfer between Archaea and Bacteria from genome sequence of Thermotoga maritima.</title>
        <authorList>
            <person name="Nelson K.E."/>
            <person name="Clayton R.A."/>
            <person name="Gill S.R."/>
            <person name="Gwinn M.L."/>
            <person name="Dodson R.J."/>
            <person name="Haft D.H."/>
            <person name="Hickey E.K."/>
            <person name="Peterson J.D."/>
            <person name="Nelson W.C."/>
            <person name="Ketchum K.A."/>
            <person name="McDonald L.A."/>
            <person name="Utterback T.R."/>
            <person name="Malek J.A."/>
            <person name="Linher K.D."/>
            <person name="Garrett M.M."/>
            <person name="Stewart A.M."/>
            <person name="Cotton M.D."/>
            <person name="Pratt M.S."/>
            <person name="Phillips C.A."/>
            <person name="Richardson D.L."/>
            <person name="Heidelberg J.F."/>
            <person name="Sutton G.G."/>
            <person name="Fleischmann R.D."/>
            <person name="Eisen J.A."/>
            <person name="White O."/>
            <person name="Salzberg S.L."/>
            <person name="Smith H.O."/>
            <person name="Venter J.C."/>
            <person name="Fraser C.M."/>
        </authorList>
    </citation>
    <scope>NUCLEOTIDE SEQUENCE [LARGE SCALE GENOMIC DNA]</scope>
    <source>
        <strain>ATCC 43589 / DSM 3109 / JCM 10099 / NBRC 100826 / MSB8</strain>
    </source>
</reference>
<sequence length="222" mass="24776">MKRDGGRLLPRERMIKAGPESLSVEELVAIVLRTGKKGKHVLELSKDLLERFDGSLIKLSNASLEEIASVEGVGMVKAITLKAALELGKRLHRELERIPEKLDSSVKVYKYCQEMVYLEREIVKVICLDTKLNVIGENTLTVGTSDRSLIHPRDVFRTAIRANASGVIVVHNHPSGDPTPSKEDRLITERLKQAGEILGVSLVDHVIVSRRGYFSFREEGEL</sequence>